<accession>O27888</accession>
<proteinExistence type="inferred from homology"/>
<name>PYRE_METTH</name>
<protein>
    <recommendedName>
        <fullName evidence="1">Orotate phosphoribosyltransferase</fullName>
        <shortName evidence="1">OPRT</shortName>
        <shortName evidence="1">OPRTase</shortName>
        <ecNumber evidence="1">2.4.2.10</ecNumber>
    </recommendedName>
</protein>
<sequence length="180" mass="19639">MQVKNTEELRRELIELLSEMDVVQRGKFILSSGRESDYYVDIKRAVTEPAVLDVIARLIADAAGEVDRIAGPALGAVPIATAVSLYSRKPLLMIRKEKKGYGTSKLIEGDLQKGDRVAVVEDVTTTGGSLLKAVRAIQENGGIVEKAFVIVDREEGAVDEFKREGITLIPLLSVSDFNHS</sequence>
<dbReference type="EC" id="2.4.2.10" evidence="1"/>
<dbReference type="EMBL" id="AE000666">
    <property type="protein sequence ID" value="AAB86326.1"/>
    <property type="molecule type" value="Genomic_DNA"/>
</dbReference>
<dbReference type="PIR" id="H69115">
    <property type="entry name" value="H69115"/>
</dbReference>
<dbReference type="RefSeq" id="WP_010877462.1">
    <property type="nucleotide sequence ID" value="NC_000916.1"/>
</dbReference>
<dbReference type="SMR" id="O27888"/>
<dbReference type="FunCoup" id="O27888">
    <property type="interactions" value="129"/>
</dbReference>
<dbReference type="STRING" id="187420.MTH_1860"/>
<dbReference type="PaxDb" id="187420-MTH_1860"/>
<dbReference type="EnsemblBacteria" id="AAB86326">
    <property type="protein sequence ID" value="AAB86326"/>
    <property type="gene ID" value="MTH_1860"/>
</dbReference>
<dbReference type="GeneID" id="1470945"/>
<dbReference type="GeneID" id="77402372"/>
<dbReference type="KEGG" id="mth:MTH_1860"/>
<dbReference type="PATRIC" id="fig|187420.15.peg.1813"/>
<dbReference type="HOGENOM" id="CLU_074878_2_0_2"/>
<dbReference type="InParanoid" id="O27888"/>
<dbReference type="UniPathway" id="UPA00070">
    <property type="reaction ID" value="UER00119"/>
</dbReference>
<dbReference type="Proteomes" id="UP000005223">
    <property type="component" value="Chromosome"/>
</dbReference>
<dbReference type="GO" id="GO:0000287">
    <property type="term" value="F:magnesium ion binding"/>
    <property type="evidence" value="ECO:0007669"/>
    <property type="project" value="UniProtKB-UniRule"/>
</dbReference>
<dbReference type="GO" id="GO:0004588">
    <property type="term" value="F:orotate phosphoribosyltransferase activity"/>
    <property type="evidence" value="ECO:0007669"/>
    <property type="project" value="UniProtKB-UniRule"/>
</dbReference>
<dbReference type="GO" id="GO:0044205">
    <property type="term" value="P:'de novo' UMP biosynthetic process"/>
    <property type="evidence" value="ECO:0007669"/>
    <property type="project" value="UniProtKB-UniRule"/>
</dbReference>
<dbReference type="GO" id="GO:0019856">
    <property type="term" value="P:pyrimidine nucleobase biosynthetic process"/>
    <property type="evidence" value="ECO:0007669"/>
    <property type="project" value="TreeGrafter"/>
</dbReference>
<dbReference type="CDD" id="cd06223">
    <property type="entry name" value="PRTases_typeI"/>
    <property type="match status" value="1"/>
</dbReference>
<dbReference type="Gene3D" id="3.40.50.2020">
    <property type="match status" value="1"/>
</dbReference>
<dbReference type="HAMAP" id="MF_01208">
    <property type="entry name" value="PyrE"/>
    <property type="match status" value="1"/>
</dbReference>
<dbReference type="InterPro" id="IPR023031">
    <property type="entry name" value="OPRT"/>
</dbReference>
<dbReference type="InterPro" id="IPR004467">
    <property type="entry name" value="Or_phspho_trans_dom"/>
</dbReference>
<dbReference type="InterPro" id="IPR000836">
    <property type="entry name" value="PRibTrfase_dom"/>
</dbReference>
<dbReference type="InterPro" id="IPR029057">
    <property type="entry name" value="PRTase-like"/>
</dbReference>
<dbReference type="NCBIfam" id="TIGR00336">
    <property type="entry name" value="pyrE"/>
    <property type="match status" value="1"/>
</dbReference>
<dbReference type="PANTHER" id="PTHR19278">
    <property type="entry name" value="OROTATE PHOSPHORIBOSYLTRANSFERASE"/>
    <property type="match status" value="1"/>
</dbReference>
<dbReference type="PANTHER" id="PTHR19278:SF9">
    <property type="entry name" value="URIDINE 5'-MONOPHOSPHATE SYNTHASE"/>
    <property type="match status" value="1"/>
</dbReference>
<dbReference type="Pfam" id="PF00156">
    <property type="entry name" value="Pribosyltran"/>
    <property type="match status" value="1"/>
</dbReference>
<dbReference type="SUPFAM" id="SSF53271">
    <property type="entry name" value="PRTase-like"/>
    <property type="match status" value="1"/>
</dbReference>
<comment type="function">
    <text evidence="1">Catalyzes the transfer of a ribosyl phosphate group from 5-phosphoribose 1-diphosphate to orotate, leading to the formation of orotidine monophosphate (OMP).</text>
</comment>
<comment type="catalytic activity">
    <reaction evidence="1">
        <text>orotidine 5'-phosphate + diphosphate = orotate + 5-phospho-alpha-D-ribose 1-diphosphate</text>
        <dbReference type="Rhea" id="RHEA:10380"/>
        <dbReference type="ChEBI" id="CHEBI:30839"/>
        <dbReference type="ChEBI" id="CHEBI:33019"/>
        <dbReference type="ChEBI" id="CHEBI:57538"/>
        <dbReference type="ChEBI" id="CHEBI:58017"/>
        <dbReference type="EC" id="2.4.2.10"/>
    </reaction>
</comment>
<comment type="cofactor">
    <cofactor evidence="1">
        <name>Mg(2+)</name>
        <dbReference type="ChEBI" id="CHEBI:18420"/>
    </cofactor>
</comment>
<comment type="pathway">
    <text evidence="1">Pyrimidine metabolism; UMP biosynthesis via de novo pathway; UMP from orotate: step 1/2.</text>
</comment>
<comment type="subunit">
    <text evidence="1">Homodimer.</text>
</comment>
<comment type="similarity">
    <text evidence="1">Belongs to the purine/pyrimidine phosphoribosyltransferase family. PyrE subfamily.</text>
</comment>
<organism>
    <name type="scientific">Methanothermobacter thermautotrophicus (strain ATCC 29096 / DSM 1053 / JCM 10044 / NBRC 100330 / Delta H)</name>
    <name type="common">Methanobacterium thermoautotrophicum</name>
    <dbReference type="NCBI Taxonomy" id="187420"/>
    <lineage>
        <taxon>Archaea</taxon>
        <taxon>Methanobacteriati</taxon>
        <taxon>Methanobacteriota</taxon>
        <taxon>Methanomada group</taxon>
        <taxon>Methanobacteria</taxon>
        <taxon>Methanobacteriales</taxon>
        <taxon>Methanobacteriaceae</taxon>
        <taxon>Methanothermobacter</taxon>
    </lineage>
</organism>
<gene>
    <name evidence="1" type="primary">pyrE</name>
    <name type="ordered locus">MTH_1860</name>
</gene>
<evidence type="ECO:0000255" key="1">
    <source>
        <dbReference type="HAMAP-Rule" id="MF_01208"/>
    </source>
</evidence>
<keyword id="KW-0328">Glycosyltransferase</keyword>
<keyword id="KW-0460">Magnesium</keyword>
<keyword id="KW-0665">Pyrimidine biosynthesis</keyword>
<keyword id="KW-1185">Reference proteome</keyword>
<keyword id="KW-0808">Transferase</keyword>
<feature type="chain" id="PRO_0000110783" description="Orotate phosphoribosyltransferase">
    <location>
        <begin position="1"/>
        <end position="180"/>
    </location>
</feature>
<feature type="binding site" evidence="1">
    <location>
        <position position="95"/>
    </location>
    <ligand>
        <name>5-phospho-alpha-D-ribose 1-diphosphate</name>
        <dbReference type="ChEBI" id="CHEBI:58017"/>
        <note>ligand shared between dimeric partners</note>
    </ligand>
</feature>
<feature type="binding site" description="in other chain" evidence="1">
    <location>
        <position position="96"/>
    </location>
    <ligand>
        <name>5-phospho-alpha-D-ribose 1-diphosphate</name>
        <dbReference type="ChEBI" id="CHEBI:58017"/>
        <note>ligand shared between dimeric partners</note>
    </ligand>
</feature>
<feature type="binding site" evidence="1">
    <location>
        <position position="99"/>
    </location>
    <ligand>
        <name>5-phospho-alpha-D-ribose 1-diphosphate</name>
        <dbReference type="ChEBI" id="CHEBI:58017"/>
        <note>ligand shared between dimeric partners</note>
    </ligand>
</feature>
<feature type="binding site" description="in other chain" evidence="1">
    <location>
        <begin position="121"/>
        <end position="129"/>
    </location>
    <ligand>
        <name>5-phospho-alpha-D-ribose 1-diphosphate</name>
        <dbReference type="ChEBI" id="CHEBI:58017"/>
        <note>ligand shared between dimeric partners</note>
    </ligand>
</feature>
<feature type="binding site" evidence="1">
    <location>
        <position position="125"/>
    </location>
    <ligand>
        <name>orotate</name>
        <dbReference type="ChEBI" id="CHEBI:30839"/>
    </ligand>
</feature>
<feature type="binding site" evidence="1">
    <location>
        <position position="153"/>
    </location>
    <ligand>
        <name>orotate</name>
        <dbReference type="ChEBI" id="CHEBI:30839"/>
    </ligand>
</feature>
<reference key="1">
    <citation type="journal article" date="1997" name="J. Bacteriol.">
        <title>Complete genome sequence of Methanobacterium thermoautotrophicum deltaH: functional analysis and comparative genomics.</title>
        <authorList>
            <person name="Smith D.R."/>
            <person name="Doucette-Stamm L.A."/>
            <person name="Deloughery C."/>
            <person name="Lee H.-M."/>
            <person name="Dubois J."/>
            <person name="Aldredge T."/>
            <person name="Bashirzadeh R."/>
            <person name="Blakely D."/>
            <person name="Cook R."/>
            <person name="Gilbert K."/>
            <person name="Harrison D."/>
            <person name="Hoang L."/>
            <person name="Keagle P."/>
            <person name="Lumm W."/>
            <person name="Pothier B."/>
            <person name="Qiu D."/>
            <person name="Spadafora R."/>
            <person name="Vicare R."/>
            <person name="Wang Y."/>
            <person name="Wierzbowski J."/>
            <person name="Gibson R."/>
            <person name="Jiwani N."/>
            <person name="Caruso A."/>
            <person name="Bush D."/>
            <person name="Safer H."/>
            <person name="Patwell D."/>
            <person name="Prabhakar S."/>
            <person name="McDougall S."/>
            <person name="Shimer G."/>
            <person name="Goyal A."/>
            <person name="Pietrovski S."/>
            <person name="Church G.M."/>
            <person name="Daniels C.J."/>
            <person name="Mao J.-I."/>
            <person name="Rice P."/>
            <person name="Noelling J."/>
            <person name="Reeve J.N."/>
        </authorList>
    </citation>
    <scope>NUCLEOTIDE SEQUENCE [LARGE SCALE GENOMIC DNA]</scope>
    <source>
        <strain>ATCC 29096 / DSM 1053 / JCM 10044 / NBRC 100330 / Delta H</strain>
    </source>
</reference>